<keyword id="KW-0997">Cell inner membrane</keyword>
<keyword id="KW-1003">Cell membrane</keyword>
<keyword id="KW-0378">Hydrolase</keyword>
<keyword id="KW-0441">Lipid A biosynthesis</keyword>
<keyword id="KW-0444">Lipid biosynthesis</keyword>
<keyword id="KW-0443">Lipid metabolism</keyword>
<keyword id="KW-0464">Manganese</keyword>
<keyword id="KW-0472">Membrane</keyword>
<keyword id="KW-0479">Metal-binding</keyword>
<keyword id="KW-1185">Reference proteome</keyword>
<feature type="chain" id="PRO_1000025054" description="UDP-2,3-diacylglucosamine hydrolase">
    <location>
        <begin position="1"/>
        <end position="240"/>
    </location>
</feature>
<feature type="binding site" evidence="1">
    <location>
        <position position="8"/>
    </location>
    <ligand>
        <name>Mn(2+)</name>
        <dbReference type="ChEBI" id="CHEBI:29035"/>
        <label>1</label>
    </ligand>
</feature>
<feature type="binding site" evidence="1">
    <location>
        <position position="10"/>
    </location>
    <ligand>
        <name>Mn(2+)</name>
        <dbReference type="ChEBI" id="CHEBI:29035"/>
        <label>1</label>
    </ligand>
</feature>
<feature type="binding site" evidence="1">
    <location>
        <position position="41"/>
    </location>
    <ligand>
        <name>Mn(2+)</name>
        <dbReference type="ChEBI" id="CHEBI:29035"/>
        <label>1</label>
    </ligand>
</feature>
<feature type="binding site" evidence="1">
    <location>
        <position position="41"/>
    </location>
    <ligand>
        <name>Mn(2+)</name>
        <dbReference type="ChEBI" id="CHEBI:29035"/>
        <label>2</label>
    </ligand>
</feature>
<feature type="binding site" evidence="1">
    <location>
        <begin position="79"/>
        <end position="80"/>
    </location>
    <ligand>
        <name>substrate</name>
    </ligand>
</feature>
<feature type="binding site" evidence="1">
    <location>
        <position position="79"/>
    </location>
    <ligand>
        <name>Mn(2+)</name>
        <dbReference type="ChEBI" id="CHEBI:29035"/>
        <label>2</label>
    </ligand>
</feature>
<feature type="binding site" evidence="1">
    <location>
        <position position="114"/>
    </location>
    <ligand>
        <name>Mn(2+)</name>
        <dbReference type="ChEBI" id="CHEBI:29035"/>
        <label>2</label>
    </ligand>
</feature>
<feature type="binding site" evidence="1">
    <location>
        <position position="122"/>
    </location>
    <ligand>
        <name>substrate</name>
    </ligand>
</feature>
<feature type="binding site" evidence="1">
    <location>
        <position position="160"/>
    </location>
    <ligand>
        <name>substrate</name>
    </ligand>
</feature>
<feature type="binding site" evidence="1">
    <location>
        <position position="164"/>
    </location>
    <ligand>
        <name>substrate</name>
    </ligand>
</feature>
<feature type="binding site" evidence="1">
    <location>
        <position position="167"/>
    </location>
    <ligand>
        <name>substrate</name>
    </ligand>
</feature>
<feature type="binding site" evidence="1">
    <location>
        <position position="195"/>
    </location>
    <ligand>
        <name>Mn(2+)</name>
        <dbReference type="ChEBI" id="CHEBI:29035"/>
        <label>2</label>
    </ligand>
</feature>
<feature type="binding site" evidence="1">
    <location>
        <position position="195"/>
    </location>
    <ligand>
        <name>substrate</name>
    </ligand>
</feature>
<feature type="binding site" evidence="1">
    <location>
        <position position="197"/>
    </location>
    <ligand>
        <name>Mn(2+)</name>
        <dbReference type="ChEBI" id="CHEBI:29035"/>
        <label>1</label>
    </ligand>
</feature>
<name>LPXH_PECAS</name>
<proteinExistence type="inferred from homology"/>
<protein>
    <recommendedName>
        <fullName evidence="1">UDP-2,3-diacylglucosamine hydrolase</fullName>
        <ecNumber evidence="1">3.6.1.54</ecNumber>
    </recommendedName>
    <alternativeName>
        <fullName evidence="1">UDP-2,3-diacylglucosamine diphosphatase</fullName>
    </alternativeName>
</protein>
<gene>
    <name evidence="1" type="primary">lpxH</name>
    <name type="ordered locus">ECA3155</name>
</gene>
<reference key="1">
    <citation type="journal article" date="2004" name="Proc. Natl. Acad. Sci. U.S.A.">
        <title>Genome sequence of the enterobacterial phytopathogen Erwinia carotovora subsp. atroseptica and characterization of virulence factors.</title>
        <authorList>
            <person name="Bell K.S."/>
            <person name="Sebaihia M."/>
            <person name="Pritchard L."/>
            <person name="Holden M.T.G."/>
            <person name="Hyman L.J."/>
            <person name="Holeva M.C."/>
            <person name="Thomson N.R."/>
            <person name="Bentley S.D."/>
            <person name="Churcher L.J.C."/>
            <person name="Mungall K."/>
            <person name="Atkin R."/>
            <person name="Bason N."/>
            <person name="Brooks K."/>
            <person name="Chillingworth T."/>
            <person name="Clark K."/>
            <person name="Doggett J."/>
            <person name="Fraser A."/>
            <person name="Hance Z."/>
            <person name="Hauser H."/>
            <person name="Jagels K."/>
            <person name="Moule S."/>
            <person name="Norbertczak H."/>
            <person name="Ormond D."/>
            <person name="Price C."/>
            <person name="Quail M.A."/>
            <person name="Sanders M."/>
            <person name="Walker D."/>
            <person name="Whitehead S."/>
            <person name="Salmond G.P.C."/>
            <person name="Birch P.R.J."/>
            <person name="Parkhill J."/>
            <person name="Toth I.K."/>
        </authorList>
    </citation>
    <scope>NUCLEOTIDE SEQUENCE [LARGE SCALE GENOMIC DNA]</scope>
    <source>
        <strain>SCRI 1043 / ATCC BAA-672</strain>
    </source>
</reference>
<organism>
    <name type="scientific">Pectobacterium atrosepticum (strain SCRI 1043 / ATCC BAA-672)</name>
    <name type="common">Erwinia carotovora subsp. atroseptica</name>
    <dbReference type="NCBI Taxonomy" id="218491"/>
    <lineage>
        <taxon>Bacteria</taxon>
        <taxon>Pseudomonadati</taxon>
        <taxon>Pseudomonadota</taxon>
        <taxon>Gammaproteobacteria</taxon>
        <taxon>Enterobacterales</taxon>
        <taxon>Pectobacteriaceae</taxon>
        <taxon>Pectobacterium</taxon>
    </lineage>
</organism>
<sequence>MATLFIADLHLSLHEPAITAGFLRFLRHEAIHADALYILGDLFDTWIGDDDPQPLHATIAAELYALHQLGITCYFVHGNRDFLIGKRFARQSGMTLLPTENVVDLYGQKILILHGDTLCTDDLAYQKFRRRVHNPFIQQLFLLLPLSLRLKIAAKMRASSQQANQQKSQQIMDVNPEQVLERLRHYQVKTMIHGHTHRPAIHQVDLGKSYGRRAVLGAWHEEGSMIKVTPQNIELISFPF</sequence>
<accession>Q6D2E1</accession>
<evidence type="ECO:0000255" key="1">
    <source>
        <dbReference type="HAMAP-Rule" id="MF_00575"/>
    </source>
</evidence>
<dbReference type="EC" id="3.6.1.54" evidence="1"/>
<dbReference type="EMBL" id="BX950851">
    <property type="protein sequence ID" value="CAG76053.1"/>
    <property type="molecule type" value="Genomic_DNA"/>
</dbReference>
<dbReference type="RefSeq" id="WP_011094677.1">
    <property type="nucleotide sequence ID" value="NC_004547.2"/>
</dbReference>
<dbReference type="SMR" id="Q6D2E1"/>
<dbReference type="STRING" id="218491.ECA3155"/>
<dbReference type="KEGG" id="eca:ECA3155"/>
<dbReference type="PATRIC" id="fig|218491.5.peg.3192"/>
<dbReference type="eggNOG" id="COG2908">
    <property type="taxonomic scope" value="Bacteria"/>
</dbReference>
<dbReference type="HOGENOM" id="CLU_074586_0_0_6"/>
<dbReference type="OrthoDB" id="9783283at2"/>
<dbReference type="UniPathway" id="UPA00359">
    <property type="reaction ID" value="UER00480"/>
</dbReference>
<dbReference type="Proteomes" id="UP000007966">
    <property type="component" value="Chromosome"/>
</dbReference>
<dbReference type="GO" id="GO:0005737">
    <property type="term" value="C:cytoplasm"/>
    <property type="evidence" value="ECO:0007669"/>
    <property type="project" value="InterPro"/>
</dbReference>
<dbReference type="GO" id="GO:0019897">
    <property type="term" value="C:extrinsic component of plasma membrane"/>
    <property type="evidence" value="ECO:0007669"/>
    <property type="project" value="UniProtKB-UniRule"/>
</dbReference>
<dbReference type="GO" id="GO:0030145">
    <property type="term" value="F:manganese ion binding"/>
    <property type="evidence" value="ECO:0007669"/>
    <property type="project" value="UniProtKB-UniRule"/>
</dbReference>
<dbReference type="GO" id="GO:0008758">
    <property type="term" value="F:UDP-2,3-diacylglucosamine hydrolase activity"/>
    <property type="evidence" value="ECO:0007669"/>
    <property type="project" value="UniProtKB-UniRule"/>
</dbReference>
<dbReference type="GO" id="GO:0009245">
    <property type="term" value="P:lipid A biosynthetic process"/>
    <property type="evidence" value="ECO:0007669"/>
    <property type="project" value="UniProtKB-UniRule"/>
</dbReference>
<dbReference type="CDD" id="cd07398">
    <property type="entry name" value="MPP_YbbF-LpxH"/>
    <property type="match status" value="1"/>
</dbReference>
<dbReference type="Gene3D" id="3.60.21.10">
    <property type="match status" value="1"/>
</dbReference>
<dbReference type="HAMAP" id="MF_00575">
    <property type="entry name" value="LpxH"/>
    <property type="match status" value="1"/>
</dbReference>
<dbReference type="InterPro" id="IPR004843">
    <property type="entry name" value="Calcineurin-like_PHP_ApaH"/>
</dbReference>
<dbReference type="InterPro" id="IPR043461">
    <property type="entry name" value="LpxH-like"/>
</dbReference>
<dbReference type="InterPro" id="IPR029052">
    <property type="entry name" value="Metallo-depent_PP-like"/>
</dbReference>
<dbReference type="InterPro" id="IPR010138">
    <property type="entry name" value="UDP-diacylglucosamine_Hdrlase"/>
</dbReference>
<dbReference type="NCBIfam" id="TIGR01854">
    <property type="entry name" value="lipid_A_lpxH"/>
    <property type="match status" value="1"/>
</dbReference>
<dbReference type="NCBIfam" id="NF003743">
    <property type="entry name" value="PRK05340.1"/>
    <property type="match status" value="1"/>
</dbReference>
<dbReference type="PANTHER" id="PTHR34990:SF1">
    <property type="entry name" value="UDP-2,3-DIACYLGLUCOSAMINE HYDROLASE"/>
    <property type="match status" value="1"/>
</dbReference>
<dbReference type="PANTHER" id="PTHR34990">
    <property type="entry name" value="UDP-2,3-DIACYLGLUCOSAMINE HYDROLASE-RELATED"/>
    <property type="match status" value="1"/>
</dbReference>
<dbReference type="Pfam" id="PF00149">
    <property type="entry name" value="Metallophos"/>
    <property type="match status" value="1"/>
</dbReference>
<dbReference type="SUPFAM" id="SSF56300">
    <property type="entry name" value="Metallo-dependent phosphatases"/>
    <property type="match status" value="1"/>
</dbReference>
<comment type="function">
    <text evidence="1">Hydrolyzes the pyrophosphate bond of UDP-2,3-diacylglucosamine to yield 2,3-diacylglucosamine 1-phosphate (lipid X) and UMP by catalyzing the attack of water at the alpha-P atom. Involved in the biosynthesis of lipid A, a phosphorylated glycolipid that anchors the lipopolysaccharide to the outer membrane of the cell.</text>
</comment>
<comment type="catalytic activity">
    <reaction evidence="1">
        <text>UDP-2-N,3-O-bis[(3R)-3-hydroxytetradecanoyl]-alpha-D-glucosamine + H2O = 2-N,3-O-bis[(3R)-3-hydroxytetradecanoyl]-alpha-D-glucosaminyl 1-phosphate + UMP + 2 H(+)</text>
        <dbReference type="Rhea" id="RHEA:25213"/>
        <dbReference type="ChEBI" id="CHEBI:15377"/>
        <dbReference type="ChEBI" id="CHEBI:15378"/>
        <dbReference type="ChEBI" id="CHEBI:57865"/>
        <dbReference type="ChEBI" id="CHEBI:57957"/>
        <dbReference type="ChEBI" id="CHEBI:78847"/>
        <dbReference type="EC" id="3.6.1.54"/>
    </reaction>
</comment>
<comment type="cofactor">
    <cofactor evidence="1">
        <name>Mn(2+)</name>
        <dbReference type="ChEBI" id="CHEBI:29035"/>
    </cofactor>
    <text evidence="1">Binds 2 Mn(2+) ions per subunit in a binuclear metal center.</text>
</comment>
<comment type="pathway">
    <text evidence="1">Glycolipid biosynthesis; lipid IV(A) biosynthesis; lipid IV(A) from (3R)-3-hydroxytetradecanoyl-[acyl-carrier-protein] and UDP-N-acetyl-alpha-D-glucosamine: step 4/6.</text>
</comment>
<comment type="subcellular location">
    <subcellularLocation>
        <location evidence="1">Cell inner membrane</location>
        <topology evidence="1">Peripheral membrane protein</topology>
        <orientation evidence="1">Cytoplasmic side</orientation>
    </subcellularLocation>
</comment>
<comment type="similarity">
    <text evidence="1">Belongs to the LpxH family.</text>
</comment>